<accession>Q2K9P7</accession>
<comment type="function">
    <text evidence="1">Catalyzes the transfer of an acyl group from acyl-phosphate (acyl-PO(4)) to glycerol-3-phosphate (G3P) to form lysophosphatidic acid (LPA). This enzyme utilizes acyl-phosphate as fatty acyl donor, but not acyl-CoA or acyl-ACP.</text>
</comment>
<comment type="catalytic activity">
    <reaction evidence="1">
        <text>an acyl phosphate + sn-glycerol 3-phosphate = a 1-acyl-sn-glycero-3-phosphate + phosphate</text>
        <dbReference type="Rhea" id="RHEA:34075"/>
        <dbReference type="ChEBI" id="CHEBI:43474"/>
        <dbReference type="ChEBI" id="CHEBI:57597"/>
        <dbReference type="ChEBI" id="CHEBI:57970"/>
        <dbReference type="ChEBI" id="CHEBI:59918"/>
        <dbReference type="EC" id="2.3.1.275"/>
    </reaction>
</comment>
<comment type="pathway">
    <text evidence="1">Lipid metabolism; phospholipid metabolism.</text>
</comment>
<comment type="subunit">
    <text evidence="1">Probably interacts with PlsX.</text>
</comment>
<comment type="subcellular location">
    <subcellularLocation>
        <location evidence="1">Cell inner membrane</location>
        <topology evidence="1">Multi-pass membrane protein</topology>
    </subcellularLocation>
</comment>
<comment type="similarity">
    <text evidence="1">Belongs to the PlsY family.</text>
</comment>
<reference key="1">
    <citation type="journal article" date="2006" name="Proc. Natl. Acad. Sci. U.S.A.">
        <title>The partitioned Rhizobium etli genome: genetic and metabolic redundancy in seven interacting replicons.</title>
        <authorList>
            <person name="Gonzalez V."/>
            <person name="Santamaria R.I."/>
            <person name="Bustos P."/>
            <person name="Hernandez-Gonzalez I."/>
            <person name="Medrano-Soto A."/>
            <person name="Moreno-Hagelsieb G."/>
            <person name="Janga S.C."/>
            <person name="Ramirez M.A."/>
            <person name="Jimenez-Jacinto V."/>
            <person name="Collado-Vides J."/>
            <person name="Davila G."/>
        </authorList>
    </citation>
    <scope>NUCLEOTIDE SEQUENCE [LARGE SCALE GENOMIC DNA]</scope>
    <source>
        <strain>ATCC 51251 / DSM 11541 / JCM 21823 / NBRC 15573 / CFN 42</strain>
    </source>
</reference>
<proteinExistence type="inferred from homology"/>
<sequence length="206" mass="21418">MLSNLMSWQITLQIALAAAVIGYLLGSIPFGLILTRAAGLGDVRSIGSGNIGATNVLRTGNRKLAAATLLLDALKASAAAWIVGYFLGEEAAIIAGFFAFIGHLFPVWIGFKGGKGVATYIGTLLGVAPIMVVLFAAVWLAVAVTTRYSSLSALVAMLVIPVALLILGNEKVAAVMAIMTVISYWKHRANISRLMGGTESKIGAKG</sequence>
<dbReference type="EC" id="2.3.1.275" evidence="1"/>
<dbReference type="EMBL" id="CP000133">
    <property type="protein sequence ID" value="ABC90439.1"/>
    <property type="molecule type" value="Genomic_DNA"/>
</dbReference>
<dbReference type="RefSeq" id="WP_011424955.1">
    <property type="nucleotide sequence ID" value="NC_007761.1"/>
</dbReference>
<dbReference type="SMR" id="Q2K9P7"/>
<dbReference type="KEGG" id="ret:RHE_CH01640"/>
<dbReference type="eggNOG" id="COG0344">
    <property type="taxonomic scope" value="Bacteria"/>
</dbReference>
<dbReference type="HOGENOM" id="CLU_081254_1_0_5"/>
<dbReference type="OrthoDB" id="9777124at2"/>
<dbReference type="UniPathway" id="UPA00085"/>
<dbReference type="Proteomes" id="UP000001936">
    <property type="component" value="Chromosome"/>
</dbReference>
<dbReference type="GO" id="GO:0005886">
    <property type="term" value="C:plasma membrane"/>
    <property type="evidence" value="ECO:0007669"/>
    <property type="project" value="UniProtKB-SubCell"/>
</dbReference>
<dbReference type="GO" id="GO:0043772">
    <property type="term" value="F:acyl-phosphate glycerol-3-phosphate acyltransferase activity"/>
    <property type="evidence" value="ECO:0007669"/>
    <property type="project" value="UniProtKB-UniRule"/>
</dbReference>
<dbReference type="GO" id="GO:0008654">
    <property type="term" value="P:phospholipid biosynthetic process"/>
    <property type="evidence" value="ECO:0007669"/>
    <property type="project" value="UniProtKB-UniRule"/>
</dbReference>
<dbReference type="HAMAP" id="MF_01043">
    <property type="entry name" value="PlsY"/>
    <property type="match status" value="1"/>
</dbReference>
<dbReference type="InterPro" id="IPR003811">
    <property type="entry name" value="G3P_acylTferase_PlsY"/>
</dbReference>
<dbReference type="NCBIfam" id="TIGR00023">
    <property type="entry name" value="glycerol-3-phosphate 1-O-acyltransferase PlsY"/>
    <property type="match status" value="1"/>
</dbReference>
<dbReference type="PANTHER" id="PTHR30309:SF0">
    <property type="entry name" value="GLYCEROL-3-PHOSPHATE ACYLTRANSFERASE-RELATED"/>
    <property type="match status" value="1"/>
</dbReference>
<dbReference type="PANTHER" id="PTHR30309">
    <property type="entry name" value="INNER MEMBRANE PROTEIN YGIH"/>
    <property type="match status" value="1"/>
</dbReference>
<dbReference type="Pfam" id="PF02660">
    <property type="entry name" value="G3P_acyltransf"/>
    <property type="match status" value="1"/>
</dbReference>
<dbReference type="SMART" id="SM01207">
    <property type="entry name" value="G3P_acyltransf"/>
    <property type="match status" value="1"/>
</dbReference>
<name>PLSY_RHIEC</name>
<evidence type="ECO:0000255" key="1">
    <source>
        <dbReference type="HAMAP-Rule" id="MF_01043"/>
    </source>
</evidence>
<organism>
    <name type="scientific">Rhizobium etli (strain ATCC 51251 / DSM 11541 / JCM 21823 / NBRC 15573 / CFN 42)</name>
    <dbReference type="NCBI Taxonomy" id="347834"/>
    <lineage>
        <taxon>Bacteria</taxon>
        <taxon>Pseudomonadati</taxon>
        <taxon>Pseudomonadota</taxon>
        <taxon>Alphaproteobacteria</taxon>
        <taxon>Hyphomicrobiales</taxon>
        <taxon>Rhizobiaceae</taxon>
        <taxon>Rhizobium/Agrobacterium group</taxon>
        <taxon>Rhizobium</taxon>
    </lineage>
</organism>
<gene>
    <name evidence="1" type="primary">plsY</name>
    <name type="ordered locus">RHE_CH01640</name>
</gene>
<feature type="chain" id="PRO_0000250320" description="Glycerol-3-phosphate acyltransferase">
    <location>
        <begin position="1"/>
        <end position="206"/>
    </location>
</feature>
<feature type="transmembrane region" description="Helical" evidence="1">
    <location>
        <begin position="14"/>
        <end position="34"/>
    </location>
</feature>
<feature type="transmembrane region" description="Helical" evidence="1">
    <location>
        <begin position="67"/>
        <end position="87"/>
    </location>
</feature>
<feature type="transmembrane region" description="Helical" evidence="1">
    <location>
        <begin position="91"/>
        <end position="111"/>
    </location>
</feature>
<feature type="transmembrane region" description="Helical" evidence="1">
    <location>
        <begin position="124"/>
        <end position="144"/>
    </location>
</feature>
<feature type="transmembrane region" description="Helical" evidence="1">
    <location>
        <begin position="148"/>
        <end position="168"/>
    </location>
</feature>
<keyword id="KW-0997">Cell inner membrane</keyword>
<keyword id="KW-1003">Cell membrane</keyword>
<keyword id="KW-0444">Lipid biosynthesis</keyword>
<keyword id="KW-0443">Lipid metabolism</keyword>
<keyword id="KW-0472">Membrane</keyword>
<keyword id="KW-0594">Phospholipid biosynthesis</keyword>
<keyword id="KW-1208">Phospholipid metabolism</keyword>
<keyword id="KW-1185">Reference proteome</keyword>
<keyword id="KW-0808">Transferase</keyword>
<keyword id="KW-0812">Transmembrane</keyword>
<keyword id="KW-1133">Transmembrane helix</keyword>
<protein>
    <recommendedName>
        <fullName evidence="1">Glycerol-3-phosphate acyltransferase</fullName>
    </recommendedName>
    <alternativeName>
        <fullName evidence="1">Acyl-PO4 G3P acyltransferase</fullName>
    </alternativeName>
    <alternativeName>
        <fullName evidence="1">Acyl-phosphate--glycerol-3-phosphate acyltransferase</fullName>
    </alternativeName>
    <alternativeName>
        <fullName evidence="1">G3P acyltransferase</fullName>
        <shortName evidence="1">GPAT</shortName>
        <ecNumber evidence="1">2.3.1.275</ecNumber>
    </alternativeName>
    <alternativeName>
        <fullName evidence="1">Lysophosphatidic acid synthase</fullName>
        <shortName evidence="1">LPA synthase</shortName>
    </alternativeName>
</protein>